<protein>
    <recommendedName>
        <fullName evidence="2">Cytochrome b6-f complex subunit 4</fullName>
    </recommendedName>
    <alternativeName>
        <fullName evidence="2">17 kDa polypeptide</fullName>
    </alternativeName>
</protein>
<organism>
    <name type="scientific">Oenothera elata subsp. hookeri</name>
    <name type="common">Hooker's evening primrose</name>
    <name type="synonym">Oenothera hookeri</name>
    <dbReference type="NCBI Taxonomy" id="85636"/>
    <lineage>
        <taxon>Eukaryota</taxon>
        <taxon>Viridiplantae</taxon>
        <taxon>Streptophyta</taxon>
        <taxon>Embryophyta</taxon>
        <taxon>Tracheophyta</taxon>
        <taxon>Spermatophyta</taxon>
        <taxon>Magnoliopsida</taxon>
        <taxon>eudicotyledons</taxon>
        <taxon>Gunneridae</taxon>
        <taxon>Pentapetalae</taxon>
        <taxon>rosids</taxon>
        <taxon>malvids</taxon>
        <taxon>Myrtales</taxon>
        <taxon>Onagraceae</taxon>
        <taxon>Onagroideae</taxon>
        <taxon>Onagreae</taxon>
        <taxon>Oenothera</taxon>
    </lineage>
</organism>
<evidence type="ECO:0000250" key="1"/>
<evidence type="ECO:0000255" key="2">
    <source>
        <dbReference type="HAMAP-Rule" id="MF_01344"/>
    </source>
</evidence>
<dbReference type="EMBL" id="AJ271079">
    <property type="protein sequence ID" value="CAB67190.3"/>
    <property type="molecule type" value="Genomic_DNA"/>
</dbReference>
<dbReference type="RefSeq" id="NP_084724.2">
    <property type="nucleotide sequence ID" value="NC_002693.2"/>
</dbReference>
<dbReference type="SMR" id="Q9MTJ4"/>
<dbReference type="GeneID" id="802726"/>
<dbReference type="GO" id="GO:0009535">
    <property type="term" value="C:chloroplast thylakoid membrane"/>
    <property type="evidence" value="ECO:0007669"/>
    <property type="project" value="UniProtKB-SubCell"/>
</dbReference>
<dbReference type="GO" id="GO:0045158">
    <property type="term" value="F:electron transporter, transferring electrons within cytochrome b6/f complex of photosystem II activity"/>
    <property type="evidence" value="ECO:0007669"/>
    <property type="project" value="UniProtKB-UniRule"/>
</dbReference>
<dbReference type="GO" id="GO:0045156">
    <property type="term" value="F:electron transporter, transferring electrons within the cyclic electron transport pathway of photosynthesis activity"/>
    <property type="evidence" value="ECO:0007669"/>
    <property type="project" value="InterPro"/>
</dbReference>
<dbReference type="GO" id="GO:0016491">
    <property type="term" value="F:oxidoreductase activity"/>
    <property type="evidence" value="ECO:0007669"/>
    <property type="project" value="InterPro"/>
</dbReference>
<dbReference type="GO" id="GO:0009767">
    <property type="term" value="P:photosynthetic electron transport chain"/>
    <property type="evidence" value="ECO:0007669"/>
    <property type="project" value="InterPro"/>
</dbReference>
<dbReference type="CDD" id="cd00290">
    <property type="entry name" value="cytochrome_b_C"/>
    <property type="match status" value="1"/>
</dbReference>
<dbReference type="FunFam" id="1.10.287.980:FF:000001">
    <property type="entry name" value="Cytochrome b6-f complex subunit 4"/>
    <property type="match status" value="1"/>
</dbReference>
<dbReference type="FunFam" id="1.20.5.510:FF:000002">
    <property type="entry name" value="Cytochrome b6-f complex subunit 4"/>
    <property type="match status" value="1"/>
</dbReference>
<dbReference type="Gene3D" id="1.10.287.980">
    <property type="entry name" value="plastocyanin oxidoreductase"/>
    <property type="match status" value="1"/>
</dbReference>
<dbReference type="Gene3D" id="1.20.5.510">
    <property type="entry name" value="Single helix bin"/>
    <property type="match status" value="1"/>
</dbReference>
<dbReference type="HAMAP" id="MF_01344">
    <property type="entry name" value="Cytb6_f_subIV"/>
    <property type="match status" value="1"/>
</dbReference>
<dbReference type="InterPro" id="IPR005798">
    <property type="entry name" value="Cyt_b/b6_C"/>
</dbReference>
<dbReference type="InterPro" id="IPR036150">
    <property type="entry name" value="Cyt_b/b6_C_sf"/>
</dbReference>
<dbReference type="InterPro" id="IPR005870">
    <property type="entry name" value="Cyt_b6/f_cplx_suIV"/>
</dbReference>
<dbReference type="InterPro" id="IPR048260">
    <property type="entry name" value="Cytochrome_b_C_euk/bac"/>
</dbReference>
<dbReference type="NCBIfam" id="TIGR01156">
    <property type="entry name" value="cytb6_f_IV"/>
    <property type="match status" value="1"/>
</dbReference>
<dbReference type="PANTHER" id="PTHR19271">
    <property type="entry name" value="CYTOCHROME B"/>
    <property type="match status" value="1"/>
</dbReference>
<dbReference type="PANTHER" id="PTHR19271:SF40">
    <property type="entry name" value="CYTOCHROME B"/>
    <property type="match status" value="1"/>
</dbReference>
<dbReference type="Pfam" id="PF00032">
    <property type="entry name" value="Cytochrom_B_C"/>
    <property type="match status" value="1"/>
</dbReference>
<dbReference type="PIRSF" id="PIRSF000033">
    <property type="entry name" value="B6f_17K"/>
    <property type="match status" value="1"/>
</dbReference>
<dbReference type="SUPFAM" id="SSF81648">
    <property type="entry name" value="a domain/subunit of cytochrome bc1 complex (Ubiquinol-cytochrome c reductase)"/>
    <property type="match status" value="1"/>
</dbReference>
<dbReference type="PROSITE" id="PS51003">
    <property type="entry name" value="CYTB_CTER"/>
    <property type="match status" value="1"/>
</dbReference>
<proteinExistence type="inferred from homology"/>
<reference key="1">
    <citation type="journal article" date="2000" name="Mol. Gen. Genet.">
        <title>Complete nucleotide sequence of the Oenothera elata plastid chromosome, representing plastome I of the five distinguishable Euoenothera plastomes.</title>
        <authorList>
            <person name="Hupfer H."/>
            <person name="Swiatek M."/>
            <person name="Hornung S."/>
            <person name="Herrmann R.G."/>
            <person name="Maier R.M."/>
            <person name="Chiu W.-L."/>
            <person name="Sears B."/>
        </authorList>
    </citation>
    <scope>NUCLEOTIDE SEQUENCE [LARGE SCALE GENOMIC DNA]</scope>
    <source>
        <strain>cv. Johansen</strain>
    </source>
</reference>
<reference key="2">
    <citation type="journal article" date="2008" name="Nucleic Acids Res.">
        <title>The complete nucleotide sequences of the five genetically distinct plastid genomes of Oenothera, subsection Oenothera: I. Sequence evaluation and plastome evolution.</title>
        <authorList>
            <person name="Greiner S."/>
            <person name="Wang X."/>
            <person name="Rauwolf U."/>
            <person name="Silber M.V."/>
            <person name="Mayer K."/>
            <person name="Meurer J."/>
            <person name="Haberer G."/>
            <person name="Herrmann R.G."/>
        </authorList>
    </citation>
    <scope>SEQUENCE REVISION TO 71</scope>
</reference>
<keyword id="KW-0150">Chloroplast</keyword>
<keyword id="KW-0249">Electron transport</keyword>
<keyword id="KW-0472">Membrane</keyword>
<keyword id="KW-0602">Photosynthesis</keyword>
<keyword id="KW-0934">Plastid</keyword>
<keyword id="KW-0793">Thylakoid</keyword>
<keyword id="KW-0812">Transmembrane</keyword>
<keyword id="KW-1133">Transmembrane helix</keyword>
<keyword id="KW-0813">Transport</keyword>
<sequence length="160" mass="17517">MGVTKKPDLNDPVLRAKLAKGMGHNYYGEPAWPNDLLYIFPVVILGTIACNVGLAILEPSMLGEPADPFATPLEILPEWYFFPVFQILRTVPNKLLGVLLMVSVPSGLLTVPFLENVNKFQNPFRRPVATTVFLIGTVVALWLGIGATLPIDKSLTLGLF</sequence>
<feature type="chain" id="PRO_0000061875" description="Cytochrome b6-f complex subunit 4">
    <location>
        <begin position="1"/>
        <end position="160"/>
    </location>
</feature>
<feature type="transmembrane region" description="Helical" evidence="2">
    <location>
        <begin position="36"/>
        <end position="56"/>
    </location>
</feature>
<feature type="transmembrane region" description="Helical" evidence="2">
    <location>
        <begin position="95"/>
        <end position="115"/>
    </location>
</feature>
<feature type="transmembrane region" description="Helical" evidence="2">
    <location>
        <begin position="131"/>
        <end position="151"/>
    </location>
</feature>
<gene>
    <name evidence="2" type="primary">petD</name>
</gene>
<name>PETD_OENEH</name>
<comment type="function">
    <text evidence="2">Component of the cytochrome b6-f complex, which mediates electron transfer between photosystem II (PSII) and photosystem I (PSI), cyclic electron flow around PSI, and state transitions.</text>
</comment>
<comment type="subunit">
    <text evidence="1">The 4 large subunits of the cytochrome b6-f complex are cytochrome b6, subunit IV (17 kDa polypeptide, petD), cytochrome f and the Rieske protein, while the 4 small subunits are petG, petL, petM and petN. The complex functions as a dimer (By similarity).</text>
</comment>
<comment type="subcellular location">
    <subcellularLocation>
        <location evidence="2">Plastid</location>
        <location evidence="2">Chloroplast thylakoid membrane</location>
        <topology evidence="2">Multi-pass membrane protein</topology>
    </subcellularLocation>
</comment>
<comment type="similarity">
    <text evidence="2">Belongs to the cytochrome b family. PetD subfamily.</text>
</comment>
<accession>Q9MTJ4</accession>
<geneLocation type="chloroplast"/>